<keyword id="KW-0687">Ribonucleoprotein</keyword>
<keyword id="KW-0689">Ribosomal protein</keyword>
<keyword id="KW-0694">RNA-binding</keyword>
<keyword id="KW-0699">rRNA-binding</keyword>
<feature type="chain" id="PRO_1000079461" description="Small ribosomal subunit protein bS6">
    <location>
        <begin position="1"/>
        <end position="96"/>
    </location>
</feature>
<accession>A8LXG3</accession>
<reference key="1">
    <citation type="submission" date="2007-10" db="EMBL/GenBank/DDBJ databases">
        <title>Complete sequence of Salinispora arenicola CNS-205.</title>
        <authorList>
            <consortium name="US DOE Joint Genome Institute"/>
            <person name="Copeland A."/>
            <person name="Lucas S."/>
            <person name="Lapidus A."/>
            <person name="Barry K."/>
            <person name="Glavina del Rio T."/>
            <person name="Dalin E."/>
            <person name="Tice H."/>
            <person name="Pitluck S."/>
            <person name="Foster B."/>
            <person name="Schmutz J."/>
            <person name="Larimer F."/>
            <person name="Land M."/>
            <person name="Hauser L."/>
            <person name="Kyrpides N."/>
            <person name="Ivanova N."/>
            <person name="Jensen P.R."/>
            <person name="Moore B.S."/>
            <person name="Penn K."/>
            <person name="Jenkins C."/>
            <person name="Udwary D."/>
            <person name="Xiang L."/>
            <person name="Gontang E."/>
            <person name="Richardson P."/>
        </authorList>
    </citation>
    <scope>NUCLEOTIDE SEQUENCE [LARGE SCALE GENOMIC DNA]</scope>
    <source>
        <strain>CNS-205</strain>
    </source>
</reference>
<dbReference type="EMBL" id="CP000850">
    <property type="protein sequence ID" value="ABW00812.1"/>
    <property type="molecule type" value="Genomic_DNA"/>
</dbReference>
<dbReference type="SMR" id="A8LXG3"/>
<dbReference type="STRING" id="391037.Sare_5068"/>
<dbReference type="KEGG" id="saq:Sare_5068"/>
<dbReference type="PATRIC" id="fig|391037.6.peg.5117"/>
<dbReference type="eggNOG" id="COG0360">
    <property type="taxonomic scope" value="Bacteria"/>
</dbReference>
<dbReference type="HOGENOM" id="CLU_113441_5_3_11"/>
<dbReference type="OrthoDB" id="9812702at2"/>
<dbReference type="GO" id="GO:0005737">
    <property type="term" value="C:cytoplasm"/>
    <property type="evidence" value="ECO:0007669"/>
    <property type="project" value="UniProtKB-ARBA"/>
</dbReference>
<dbReference type="GO" id="GO:1990904">
    <property type="term" value="C:ribonucleoprotein complex"/>
    <property type="evidence" value="ECO:0007669"/>
    <property type="project" value="UniProtKB-KW"/>
</dbReference>
<dbReference type="GO" id="GO:0005840">
    <property type="term" value="C:ribosome"/>
    <property type="evidence" value="ECO:0007669"/>
    <property type="project" value="UniProtKB-KW"/>
</dbReference>
<dbReference type="GO" id="GO:0070181">
    <property type="term" value="F:small ribosomal subunit rRNA binding"/>
    <property type="evidence" value="ECO:0007669"/>
    <property type="project" value="TreeGrafter"/>
</dbReference>
<dbReference type="GO" id="GO:0003735">
    <property type="term" value="F:structural constituent of ribosome"/>
    <property type="evidence" value="ECO:0007669"/>
    <property type="project" value="InterPro"/>
</dbReference>
<dbReference type="GO" id="GO:0006412">
    <property type="term" value="P:translation"/>
    <property type="evidence" value="ECO:0007669"/>
    <property type="project" value="UniProtKB-UniRule"/>
</dbReference>
<dbReference type="CDD" id="cd00473">
    <property type="entry name" value="bS6"/>
    <property type="match status" value="1"/>
</dbReference>
<dbReference type="FunFam" id="3.30.70.60:FF:000002">
    <property type="entry name" value="30S ribosomal protein S6"/>
    <property type="match status" value="1"/>
</dbReference>
<dbReference type="Gene3D" id="3.30.70.60">
    <property type="match status" value="1"/>
</dbReference>
<dbReference type="HAMAP" id="MF_00360">
    <property type="entry name" value="Ribosomal_bS6"/>
    <property type="match status" value="1"/>
</dbReference>
<dbReference type="InterPro" id="IPR000529">
    <property type="entry name" value="Ribosomal_bS6"/>
</dbReference>
<dbReference type="InterPro" id="IPR035980">
    <property type="entry name" value="Ribosomal_bS6_sf"/>
</dbReference>
<dbReference type="InterPro" id="IPR020814">
    <property type="entry name" value="Ribosomal_S6_plastid/chlpt"/>
</dbReference>
<dbReference type="InterPro" id="IPR014717">
    <property type="entry name" value="Transl_elong_EF1B/ribsomal_bS6"/>
</dbReference>
<dbReference type="NCBIfam" id="TIGR00166">
    <property type="entry name" value="S6"/>
    <property type="match status" value="1"/>
</dbReference>
<dbReference type="PANTHER" id="PTHR21011">
    <property type="entry name" value="MITOCHONDRIAL 28S RIBOSOMAL PROTEIN S6"/>
    <property type="match status" value="1"/>
</dbReference>
<dbReference type="PANTHER" id="PTHR21011:SF1">
    <property type="entry name" value="SMALL RIBOSOMAL SUBUNIT PROTEIN BS6M"/>
    <property type="match status" value="1"/>
</dbReference>
<dbReference type="Pfam" id="PF01250">
    <property type="entry name" value="Ribosomal_S6"/>
    <property type="match status" value="1"/>
</dbReference>
<dbReference type="SUPFAM" id="SSF54995">
    <property type="entry name" value="Ribosomal protein S6"/>
    <property type="match status" value="1"/>
</dbReference>
<proteinExistence type="inferred from homology"/>
<name>RS6_SALAI</name>
<comment type="function">
    <text evidence="1">Binds together with bS18 to 16S ribosomal RNA.</text>
</comment>
<comment type="similarity">
    <text evidence="1">Belongs to the bacterial ribosomal protein bS6 family.</text>
</comment>
<gene>
    <name evidence="1" type="primary">rpsF</name>
    <name type="ordered locus">Sare_5068</name>
</gene>
<sequence length="96" mass="10985">MRHYEIMVILDSSLEERTVAPSLDTYLNVIRTAGGSVEKTDVWGRRRLAYEIDKKTEGIYAVIDLQATPAAVAELERQLRLNESVLRTKVIRPEVR</sequence>
<protein>
    <recommendedName>
        <fullName evidence="1">Small ribosomal subunit protein bS6</fullName>
    </recommendedName>
    <alternativeName>
        <fullName evidence="2">30S ribosomal protein S6</fullName>
    </alternativeName>
</protein>
<evidence type="ECO:0000255" key="1">
    <source>
        <dbReference type="HAMAP-Rule" id="MF_00360"/>
    </source>
</evidence>
<evidence type="ECO:0000305" key="2"/>
<organism>
    <name type="scientific">Salinispora arenicola (strain CNS-205)</name>
    <dbReference type="NCBI Taxonomy" id="391037"/>
    <lineage>
        <taxon>Bacteria</taxon>
        <taxon>Bacillati</taxon>
        <taxon>Actinomycetota</taxon>
        <taxon>Actinomycetes</taxon>
        <taxon>Micromonosporales</taxon>
        <taxon>Micromonosporaceae</taxon>
        <taxon>Salinispora</taxon>
    </lineage>
</organism>